<feature type="chain" id="PRO_0000326959" description="Protoheme IX farnesyltransferase">
    <location>
        <begin position="1"/>
        <end position="296"/>
    </location>
</feature>
<feature type="topological domain" description="Cytoplasmic" evidence="1">
    <location>
        <begin position="1"/>
        <end position="9"/>
    </location>
</feature>
<feature type="transmembrane region" description="Helical" evidence="1">
    <location>
        <begin position="10"/>
        <end position="28"/>
    </location>
</feature>
<feature type="topological domain" description="Periplasmic" evidence="1">
    <location>
        <begin position="29"/>
        <end position="37"/>
    </location>
</feature>
<feature type="transmembrane region" description="Helical" evidence="1">
    <location>
        <begin position="38"/>
        <end position="56"/>
    </location>
</feature>
<feature type="topological domain" description="Cytoplasmic" evidence="1">
    <location>
        <begin position="57"/>
        <end position="78"/>
    </location>
</feature>
<feature type="transmembrane region" description="Helical" evidence="1">
    <location>
        <begin position="79"/>
        <end position="97"/>
    </location>
</feature>
<feature type="topological domain" description="Periplasmic" evidence="1">
    <location>
        <begin position="98"/>
        <end position="107"/>
    </location>
</feature>
<feature type="transmembrane region" description="Helical" evidence="1">
    <location>
        <begin position="108"/>
        <end position="126"/>
    </location>
</feature>
<feature type="topological domain" description="Cytoplasmic" evidence="1">
    <location>
        <begin position="127"/>
        <end position="197"/>
    </location>
</feature>
<feature type="transmembrane region" description="Helical" evidence="1">
    <location>
        <begin position="198"/>
        <end position="216"/>
    </location>
</feature>
<feature type="topological domain" description="Periplasmic" evidence="1">
    <location>
        <begin position="217"/>
        <end position="228"/>
    </location>
</feature>
<feature type="transmembrane region" description="Helical" evidence="1">
    <location>
        <begin position="229"/>
        <end position="247"/>
    </location>
</feature>
<feature type="topological domain" description="Cytoplasmic" evidence="1">
    <location>
        <begin position="248"/>
        <end position="268"/>
    </location>
</feature>
<feature type="transmembrane region" description="Helical" evidence="1">
    <location>
        <begin position="269"/>
        <end position="287"/>
    </location>
</feature>
<feature type="topological domain" description="Periplasmic" evidence="1">
    <location>
        <begin position="288"/>
        <end position="296"/>
    </location>
</feature>
<dbReference type="EC" id="2.5.1.141" evidence="1"/>
<dbReference type="EMBL" id="CP000038">
    <property type="protein sequence ID" value="AAZ87187.1"/>
    <property type="molecule type" value="Genomic_DNA"/>
</dbReference>
<dbReference type="RefSeq" id="WP_000971327.1">
    <property type="nucleotide sequence ID" value="NC_007384.1"/>
</dbReference>
<dbReference type="SMR" id="Q3Z4X5"/>
<dbReference type="GeneID" id="93777026"/>
<dbReference type="KEGG" id="ssn:SSON_0411"/>
<dbReference type="HOGENOM" id="CLU_029631_0_0_6"/>
<dbReference type="UniPathway" id="UPA00834">
    <property type="reaction ID" value="UER00712"/>
</dbReference>
<dbReference type="Proteomes" id="UP000002529">
    <property type="component" value="Chromosome"/>
</dbReference>
<dbReference type="GO" id="GO:0005886">
    <property type="term" value="C:plasma membrane"/>
    <property type="evidence" value="ECO:0007669"/>
    <property type="project" value="UniProtKB-SubCell"/>
</dbReference>
<dbReference type="GO" id="GO:0008495">
    <property type="term" value="F:protoheme IX farnesyltransferase activity"/>
    <property type="evidence" value="ECO:0007669"/>
    <property type="project" value="UniProtKB-UniRule"/>
</dbReference>
<dbReference type="GO" id="GO:0048034">
    <property type="term" value="P:heme O biosynthetic process"/>
    <property type="evidence" value="ECO:0007669"/>
    <property type="project" value="UniProtKB-UniRule"/>
</dbReference>
<dbReference type="CDD" id="cd13957">
    <property type="entry name" value="PT_UbiA_Cox10"/>
    <property type="match status" value="1"/>
</dbReference>
<dbReference type="FunFam" id="1.10.357.140:FF:000001">
    <property type="entry name" value="Protoheme IX farnesyltransferase"/>
    <property type="match status" value="1"/>
</dbReference>
<dbReference type="Gene3D" id="1.10.357.140">
    <property type="entry name" value="UbiA prenyltransferase"/>
    <property type="match status" value="1"/>
</dbReference>
<dbReference type="HAMAP" id="MF_00154">
    <property type="entry name" value="CyoE_CtaB"/>
    <property type="match status" value="1"/>
</dbReference>
<dbReference type="InterPro" id="IPR006369">
    <property type="entry name" value="Protohaem_IX_farnesylTrfase"/>
</dbReference>
<dbReference type="InterPro" id="IPR000537">
    <property type="entry name" value="UbiA_prenyltransferase"/>
</dbReference>
<dbReference type="InterPro" id="IPR030470">
    <property type="entry name" value="UbiA_prenylTrfase_CS"/>
</dbReference>
<dbReference type="InterPro" id="IPR044878">
    <property type="entry name" value="UbiA_sf"/>
</dbReference>
<dbReference type="NCBIfam" id="TIGR01473">
    <property type="entry name" value="cyoE_ctaB"/>
    <property type="match status" value="1"/>
</dbReference>
<dbReference type="NCBIfam" id="NF003348">
    <property type="entry name" value="PRK04375.1-1"/>
    <property type="match status" value="1"/>
</dbReference>
<dbReference type="PANTHER" id="PTHR43448">
    <property type="entry name" value="PROTOHEME IX FARNESYLTRANSFERASE, MITOCHONDRIAL"/>
    <property type="match status" value="1"/>
</dbReference>
<dbReference type="PANTHER" id="PTHR43448:SF2">
    <property type="entry name" value="PROTOHEME IX FARNESYLTRANSFERASE, MITOCHONDRIAL"/>
    <property type="match status" value="1"/>
</dbReference>
<dbReference type="Pfam" id="PF01040">
    <property type="entry name" value="UbiA"/>
    <property type="match status" value="1"/>
</dbReference>
<dbReference type="PROSITE" id="PS00943">
    <property type="entry name" value="UBIA"/>
    <property type="match status" value="1"/>
</dbReference>
<evidence type="ECO:0000255" key="1">
    <source>
        <dbReference type="HAMAP-Rule" id="MF_00154"/>
    </source>
</evidence>
<proteinExistence type="inferred from homology"/>
<name>CYOE_SHISS</name>
<gene>
    <name evidence="1" type="primary">cyoE</name>
    <name type="ordered locus">SSON_0411</name>
</gene>
<accession>Q3Z4X5</accession>
<comment type="function">
    <text evidence="1">Converts heme B (protoheme IX) to heme O by substitution of the vinyl group on carbon 2 of heme B porphyrin ring with a hydroxyethyl farnesyl side group.</text>
</comment>
<comment type="catalytic activity">
    <reaction evidence="1">
        <text>heme b + (2E,6E)-farnesyl diphosphate + H2O = Fe(II)-heme o + diphosphate</text>
        <dbReference type="Rhea" id="RHEA:28070"/>
        <dbReference type="ChEBI" id="CHEBI:15377"/>
        <dbReference type="ChEBI" id="CHEBI:33019"/>
        <dbReference type="ChEBI" id="CHEBI:60344"/>
        <dbReference type="ChEBI" id="CHEBI:60530"/>
        <dbReference type="ChEBI" id="CHEBI:175763"/>
        <dbReference type="EC" id="2.5.1.141"/>
    </reaction>
</comment>
<comment type="pathway">
    <text evidence="1">Porphyrin-containing compound metabolism; heme O biosynthesis; heme O from protoheme: step 1/1.</text>
</comment>
<comment type="subcellular location">
    <subcellularLocation>
        <location evidence="1">Cell inner membrane</location>
        <topology evidence="1">Multi-pass membrane protein</topology>
    </subcellularLocation>
</comment>
<comment type="miscellaneous">
    <text evidence="1">Carbon 2 of the heme B porphyrin ring is defined according to the Fischer nomenclature.</text>
</comment>
<comment type="similarity">
    <text evidence="1">Belongs to the UbiA prenyltransferase family. Protoheme IX farnesyltransferase subfamily.</text>
</comment>
<protein>
    <recommendedName>
        <fullName evidence="1">Protoheme IX farnesyltransferase</fullName>
        <ecNumber evidence="1">2.5.1.141</ecNumber>
    </recommendedName>
    <alternativeName>
        <fullName evidence="1">Heme B farnesyltransferase</fullName>
    </alternativeName>
    <alternativeName>
        <fullName evidence="1">Heme O synthase</fullName>
    </alternativeName>
</protein>
<reference key="1">
    <citation type="journal article" date="2005" name="Nucleic Acids Res.">
        <title>Genome dynamics and diversity of Shigella species, the etiologic agents of bacillary dysentery.</title>
        <authorList>
            <person name="Yang F."/>
            <person name="Yang J."/>
            <person name="Zhang X."/>
            <person name="Chen L."/>
            <person name="Jiang Y."/>
            <person name="Yan Y."/>
            <person name="Tang X."/>
            <person name="Wang J."/>
            <person name="Xiong Z."/>
            <person name="Dong J."/>
            <person name="Xue Y."/>
            <person name="Zhu Y."/>
            <person name="Xu X."/>
            <person name="Sun L."/>
            <person name="Chen S."/>
            <person name="Nie H."/>
            <person name="Peng J."/>
            <person name="Xu J."/>
            <person name="Wang Y."/>
            <person name="Yuan Z."/>
            <person name="Wen Y."/>
            <person name="Yao Z."/>
            <person name="Shen Y."/>
            <person name="Qiang B."/>
            <person name="Hou Y."/>
            <person name="Yu J."/>
            <person name="Jin Q."/>
        </authorList>
    </citation>
    <scope>NUCLEOTIDE SEQUENCE [LARGE SCALE GENOMIC DNA]</scope>
    <source>
        <strain>Ss046</strain>
    </source>
</reference>
<keyword id="KW-0997">Cell inner membrane</keyword>
<keyword id="KW-1003">Cell membrane</keyword>
<keyword id="KW-0350">Heme biosynthesis</keyword>
<keyword id="KW-0472">Membrane</keyword>
<keyword id="KW-1185">Reference proteome</keyword>
<keyword id="KW-0808">Transferase</keyword>
<keyword id="KW-0812">Transmembrane</keyword>
<keyword id="KW-1133">Transmembrane helix</keyword>
<organism>
    <name type="scientific">Shigella sonnei (strain Ss046)</name>
    <dbReference type="NCBI Taxonomy" id="300269"/>
    <lineage>
        <taxon>Bacteria</taxon>
        <taxon>Pseudomonadati</taxon>
        <taxon>Pseudomonadota</taxon>
        <taxon>Gammaproteobacteria</taxon>
        <taxon>Enterobacterales</taxon>
        <taxon>Enterobacteriaceae</taxon>
        <taxon>Shigella</taxon>
    </lineage>
</organism>
<sequence>MMFKQYLQVTKPGIIFGNLISVIGGFLLASKGSIDYPLFIYTLVGVSLVVASGCVFNNYIDRDIDRKMERTKNRVLVKGLISPAVSLVYATLLGFAGFMLLWFGANPLACWLGVMGFVVYVGVYSLYMKRHSVYGTLIGSLSGAAPPVIGYCAVTGEFDSGAAILLAIFSLWQMPHSYAIAIFRFKDYQAANIPVLPVVKGISVAKNHITLYIIAFAVATLMLSLGGYAGYKYLVVAAAVSVWWLGMALRGYKVADDRIWARKLFGFSIIAITALSVMMSVDFMVPDSHTLLAAVW</sequence>